<dbReference type="EC" id="2.7.1.11" evidence="1"/>
<dbReference type="EMBL" id="AE003852">
    <property type="protein sequence ID" value="AAF95830.1"/>
    <property type="status" value="ALT_INIT"/>
    <property type="molecule type" value="Genomic_DNA"/>
</dbReference>
<dbReference type="PIR" id="G82045">
    <property type="entry name" value="G82045"/>
</dbReference>
<dbReference type="RefSeq" id="NP_232317.1">
    <property type="nucleotide sequence ID" value="NC_002505.1"/>
</dbReference>
<dbReference type="RefSeq" id="WP_000591796.1">
    <property type="nucleotide sequence ID" value="NZ_LT906614.1"/>
</dbReference>
<dbReference type="SMR" id="Q9KNP2"/>
<dbReference type="STRING" id="243277.VC_2689"/>
<dbReference type="DNASU" id="2615517"/>
<dbReference type="EnsemblBacteria" id="AAF95830">
    <property type="protein sequence ID" value="AAF95830"/>
    <property type="gene ID" value="VC_2689"/>
</dbReference>
<dbReference type="GeneID" id="69718715"/>
<dbReference type="KEGG" id="vch:VC_2689"/>
<dbReference type="PATRIC" id="fig|243277.26.peg.2564"/>
<dbReference type="eggNOG" id="COG0205">
    <property type="taxonomic scope" value="Bacteria"/>
</dbReference>
<dbReference type="HOGENOM" id="CLU_020655_0_1_6"/>
<dbReference type="UniPathway" id="UPA00109">
    <property type="reaction ID" value="UER00182"/>
</dbReference>
<dbReference type="Proteomes" id="UP000000584">
    <property type="component" value="Chromosome 1"/>
</dbReference>
<dbReference type="GO" id="GO:0005945">
    <property type="term" value="C:6-phosphofructokinase complex"/>
    <property type="evidence" value="ECO:0000318"/>
    <property type="project" value="GO_Central"/>
</dbReference>
<dbReference type="GO" id="GO:0003872">
    <property type="term" value="F:6-phosphofructokinase activity"/>
    <property type="evidence" value="ECO:0000318"/>
    <property type="project" value="GO_Central"/>
</dbReference>
<dbReference type="GO" id="GO:0005524">
    <property type="term" value="F:ATP binding"/>
    <property type="evidence" value="ECO:0007669"/>
    <property type="project" value="UniProtKB-KW"/>
</dbReference>
<dbReference type="GO" id="GO:0070095">
    <property type="term" value="F:fructose-6-phosphate binding"/>
    <property type="evidence" value="ECO:0000318"/>
    <property type="project" value="GO_Central"/>
</dbReference>
<dbReference type="GO" id="GO:0046872">
    <property type="term" value="F:metal ion binding"/>
    <property type="evidence" value="ECO:0007669"/>
    <property type="project" value="UniProtKB-KW"/>
</dbReference>
<dbReference type="GO" id="GO:0061621">
    <property type="term" value="P:canonical glycolysis"/>
    <property type="evidence" value="ECO:0000318"/>
    <property type="project" value="GO_Central"/>
</dbReference>
<dbReference type="GO" id="GO:0030388">
    <property type="term" value="P:fructose 1,6-bisphosphate metabolic process"/>
    <property type="evidence" value="ECO:0000318"/>
    <property type="project" value="GO_Central"/>
</dbReference>
<dbReference type="GO" id="GO:0006002">
    <property type="term" value="P:fructose 6-phosphate metabolic process"/>
    <property type="evidence" value="ECO:0000318"/>
    <property type="project" value="GO_Central"/>
</dbReference>
<dbReference type="CDD" id="cd00763">
    <property type="entry name" value="Bacterial_PFK"/>
    <property type="match status" value="1"/>
</dbReference>
<dbReference type="FunFam" id="3.40.50.450:FF:000001">
    <property type="entry name" value="ATP-dependent 6-phosphofructokinase"/>
    <property type="match status" value="1"/>
</dbReference>
<dbReference type="FunFam" id="3.40.50.460:FF:000002">
    <property type="entry name" value="ATP-dependent 6-phosphofructokinase"/>
    <property type="match status" value="1"/>
</dbReference>
<dbReference type="Gene3D" id="3.40.50.450">
    <property type="match status" value="1"/>
</dbReference>
<dbReference type="Gene3D" id="3.40.50.460">
    <property type="entry name" value="Phosphofructokinase domain"/>
    <property type="match status" value="1"/>
</dbReference>
<dbReference type="HAMAP" id="MF_00339">
    <property type="entry name" value="Phosphofructokinase_I_B1"/>
    <property type="match status" value="1"/>
</dbReference>
<dbReference type="InterPro" id="IPR022953">
    <property type="entry name" value="ATP_PFK"/>
</dbReference>
<dbReference type="InterPro" id="IPR012003">
    <property type="entry name" value="ATP_PFK_prok-type"/>
</dbReference>
<dbReference type="InterPro" id="IPR012828">
    <property type="entry name" value="PFKA_ATP_prok"/>
</dbReference>
<dbReference type="InterPro" id="IPR015912">
    <property type="entry name" value="Phosphofructokinase_CS"/>
</dbReference>
<dbReference type="InterPro" id="IPR000023">
    <property type="entry name" value="Phosphofructokinase_dom"/>
</dbReference>
<dbReference type="InterPro" id="IPR035966">
    <property type="entry name" value="PKF_sf"/>
</dbReference>
<dbReference type="NCBIfam" id="TIGR02482">
    <property type="entry name" value="PFKA_ATP"/>
    <property type="match status" value="1"/>
</dbReference>
<dbReference type="NCBIfam" id="NF002872">
    <property type="entry name" value="PRK03202.1"/>
    <property type="match status" value="1"/>
</dbReference>
<dbReference type="PANTHER" id="PTHR13697:SF4">
    <property type="entry name" value="ATP-DEPENDENT 6-PHOSPHOFRUCTOKINASE"/>
    <property type="match status" value="1"/>
</dbReference>
<dbReference type="PANTHER" id="PTHR13697">
    <property type="entry name" value="PHOSPHOFRUCTOKINASE"/>
    <property type="match status" value="1"/>
</dbReference>
<dbReference type="Pfam" id="PF00365">
    <property type="entry name" value="PFK"/>
    <property type="match status" value="1"/>
</dbReference>
<dbReference type="PIRSF" id="PIRSF000532">
    <property type="entry name" value="ATP_PFK_prok"/>
    <property type="match status" value="1"/>
</dbReference>
<dbReference type="PRINTS" id="PR00476">
    <property type="entry name" value="PHFRCTKINASE"/>
</dbReference>
<dbReference type="SUPFAM" id="SSF53784">
    <property type="entry name" value="Phosphofructokinase"/>
    <property type="match status" value="1"/>
</dbReference>
<dbReference type="PROSITE" id="PS00433">
    <property type="entry name" value="PHOSPHOFRUCTOKINASE"/>
    <property type="match status" value="1"/>
</dbReference>
<proteinExistence type="inferred from homology"/>
<name>PFKA_VIBCH</name>
<organism>
    <name type="scientific">Vibrio cholerae serotype O1 (strain ATCC 39315 / El Tor Inaba N16961)</name>
    <dbReference type="NCBI Taxonomy" id="243277"/>
    <lineage>
        <taxon>Bacteria</taxon>
        <taxon>Pseudomonadati</taxon>
        <taxon>Pseudomonadota</taxon>
        <taxon>Gammaproteobacteria</taxon>
        <taxon>Vibrionales</taxon>
        <taxon>Vibrionaceae</taxon>
        <taxon>Vibrio</taxon>
    </lineage>
</organism>
<feature type="chain" id="PRO_0000112005" description="ATP-dependent 6-phosphofructokinase">
    <location>
        <begin position="1"/>
        <end position="320"/>
    </location>
</feature>
<feature type="active site" description="Proton acceptor" evidence="1">
    <location>
        <position position="128"/>
    </location>
</feature>
<feature type="binding site" evidence="1">
    <location>
        <position position="12"/>
    </location>
    <ligand>
        <name>ATP</name>
        <dbReference type="ChEBI" id="CHEBI:30616"/>
    </ligand>
</feature>
<feature type="binding site" evidence="1">
    <location>
        <begin position="22"/>
        <end position="26"/>
    </location>
    <ligand>
        <name>ADP</name>
        <dbReference type="ChEBI" id="CHEBI:456216"/>
        <note>allosteric activator; ligand shared between dimeric partners</note>
    </ligand>
</feature>
<feature type="binding site" evidence="1">
    <location>
        <begin position="73"/>
        <end position="74"/>
    </location>
    <ligand>
        <name>ATP</name>
        <dbReference type="ChEBI" id="CHEBI:30616"/>
    </ligand>
</feature>
<feature type="binding site" evidence="1">
    <location>
        <begin position="103"/>
        <end position="106"/>
    </location>
    <ligand>
        <name>ATP</name>
        <dbReference type="ChEBI" id="CHEBI:30616"/>
    </ligand>
</feature>
<feature type="binding site" evidence="1">
    <location>
        <position position="104"/>
    </location>
    <ligand>
        <name>Mg(2+)</name>
        <dbReference type="ChEBI" id="CHEBI:18420"/>
        <note>catalytic</note>
    </ligand>
</feature>
<feature type="binding site" description="in other chain" evidence="1">
    <location>
        <begin position="126"/>
        <end position="128"/>
    </location>
    <ligand>
        <name>substrate</name>
        <note>ligand shared between dimeric partners</note>
    </ligand>
</feature>
<feature type="binding site" description="in other chain" evidence="1">
    <location>
        <position position="155"/>
    </location>
    <ligand>
        <name>ADP</name>
        <dbReference type="ChEBI" id="CHEBI:456216"/>
        <note>allosteric activator; ligand shared between dimeric partners</note>
    </ligand>
</feature>
<feature type="binding site" evidence="1">
    <location>
        <position position="163"/>
    </location>
    <ligand>
        <name>substrate</name>
        <note>ligand shared between dimeric partners</note>
    </ligand>
</feature>
<feature type="binding site" description="in other chain" evidence="1">
    <location>
        <begin position="170"/>
        <end position="172"/>
    </location>
    <ligand>
        <name>substrate</name>
        <note>ligand shared between dimeric partners</note>
    </ligand>
</feature>
<feature type="binding site" description="in other chain" evidence="1">
    <location>
        <begin position="186"/>
        <end position="188"/>
    </location>
    <ligand>
        <name>ADP</name>
        <dbReference type="ChEBI" id="CHEBI:456216"/>
        <note>allosteric activator; ligand shared between dimeric partners</note>
    </ligand>
</feature>
<feature type="binding site" description="in other chain" evidence="1">
    <location>
        <position position="212"/>
    </location>
    <ligand>
        <name>ADP</name>
        <dbReference type="ChEBI" id="CHEBI:456216"/>
        <note>allosteric activator; ligand shared between dimeric partners</note>
    </ligand>
</feature>
<feature type="binding site" description="in other chain" evidence="1">
    <location>
        <begin position="214"/>
        <end position="216"/>
    </location>
    <ligand>
        <name>ADP</name>
        <dbReference type="ChEBI" id="CHEBI:456216"/>
        <note>allosteric activator; ligand shared between dimeric partners</note>
    </ligand>
</feature>
<feature type="binding site" description="in other chain" evidence="1">
    <location>
        <position position="223"/>
    </location>
    <ligand>
        <name>substrate</name>
        <note>ligand shared between dimeric partners</note>
    </ligand>
</feature>
<feature type="binding site" evidence="1">
    <location>
        <position position="244"/>
    </location>
    <ligand>
        <name>substrate</name>
        <note>ligand shared between dimeric partners</note>
    </ligand>
</feature>
<feature type="binding site" description="in other chain" evidence="1">
    <location>
        <begin position="250"/>
        <end position="253"/>
    </location>
    <ligand>
        <name>substrate</name>
        <note>ligand shared between dimeric partners</note>
    </ligand>
</feature>
<keyword id="KW-0021">Allosteric enzyme</keyword>
<keyword id="KW-0067">ATP-binding</keyword>
<keyword id="KW-0963">Cytoplasm</keyword>
<keyword id="KW-0324">Glycolysis</keyword>
<keyword id="KW-0418">Kinase</keyword>
<keyword id="KW-0460">Magnesium</keyword>
<keyword id="KW-0479">Metal-binding</keyword>
<keyword id="KW-0547">Nucleotide-binding</keyword>
<keyword id="KW-1185">Reference proteome</keyword>
<keyword id="KW-0808">Transferase</keyword>
<evidence type="ECO:0000255" key="1">
    <source>
        <dbReference type="HAMAP-Rule" id="MF_00339"/>
    </source>
</evidence>
<evidence type="ECO:0000305" key="2"/>
<gene>
    <name evidence="1" type="primary">pfkA</name>
    <name type="ordered locus">VC_2689</name>
</gene>
<comment type="function">
    <text evidence="1">Catalyzes the phosphorylation of D-fructose 6-phosphate to fructose 1,6-bisphosphate by ATP, the first committing step of glycolysis.</text>
</comment>
<comment type="catalytic activity">
    <reaction evidence="1">
        <text>beta-D-fructose 6-phosphate + ATP = beta-D-fructose 1,6-bisphosphate + ADP + H(+)</text>
        <dbReference type="Rhea" id="RHEA:16109"/>
        <dbReference type="ChEBI" id="CHEBI:15378"/>
        <dbReference type="ChEBI" id="CHEBI:30616"/>
        <dbReference type="ChEBI" id="CHEBI:32966"/>
        <dbReference type="ChEBI" id="CHEBI:57634"/>
        <dbReference type="ChEBI" id="CHEBI:456216"/>
        <dbReference type="EC" id="2.7.1.11"/>
    </reaction>
</comment>
<comment type="cofactor">
    <cofactor evidence="1">
        <name>Mg(2+)</name>
        <dbReference type="ChEBI" id="CHEBI:18420"/>
    </cofactor>
</comment>
<comment type="activity regulation">
    <text evidence="1">Allosterically activated by ADP and other diphosphonucleosides, and allosterically inhibited by phosphoenolpyruvate.</text>
</comment>
<comment type="pathway">
    <text evidence="1">Carbohydrate degradation; glycolysis; D-glyceraldehyde 3-phosphate and glycerone phosphate from D-glucose: step 3/4.</text>
</comment>
<comment type="subunit">
    <text evidence="1">Homotetramer.</text>
</comment>
<comment type="subcellular location">
    <subcellularLocation>
        <location evidence="1">Cytoplasm</location>
    </subcellularLocation>
</comment>
<comment type="similarity">
    <text evidence="1">Belongs to the phosphofructokinase type A (PFKA) family. ATP-dependent PFK group I subfamily. Prokaryotic clade 'B1' sub-subfamily.</text>
</comment>
<comment type="sequence caution" evidence="2">
    <conflict type="erroneous initiation">
        <sequence resource="EMBL-CDS" id="AAF95830"/>
    </conflict>
</comment>
<reference key="1">
    <citation type="journal article" date="2000" name="Nature">
        <title>DNA sequence of both chromosomes of the cholera pathogen Vibrio cholerae.</title>
        <authorList>
            <person name="Heidelberg J.F."/>
            <person name="Eisen J.A."/>
            <person name="Nelson W.C."/>
            <person name="Clayton R.A."/>
            <person name="Gwinn M.L."/>
            <person name="Dodson R.J."/>
            <person name="Haft D.H."/>
            <person name="Hickey E.K."/>
            <person name="Peterson J.D."/>
            <person name="Umayam L.A."/>
            <person name="Gill S.R."/>
            <person name="Nelson K.E."/>
            <person name="Read T.D."/>
            <person name="Tettelin H."/>
            <person name="Richardson D.L."/>
            <person name="Ermolaeva M.D."/>
            <person name="Vamathevan J.J."/>
            <person name="Bass S."/>
            <person name="Qin H."/>
            <person name="Dragoi I."/>
            <person name="Sellers P."/>
            <person name="McDonald L.A."/>
            <person name="Utterback T.R."/>
            <person name="Fleischmann R.D."/>
            <person name="Nierman W.C."/>
            <person name="White O."/>
            <person name="Salzberg S.L."/>
            <person name="Smith H.O."/>
            <person name="Colwell R.R."/>
            <person name="Mekalanos J.J."/>
            <person name="Venter J.C."/>
            <person name="Fraser C.M."/>
        </authorList>
    </citation>
    <scope>NUCLEOTIDE SEQUENCE [LARGE SCALE GENOMIC DNA]</scope>
    <source>
        <strain>ATCC 39315 / El Tor Inaba N16961</strain>
    </source>
</reference>
<sequence length="320" mass="34670">MIKKIGVLTSGGDAPGMNAAIRGVVRTALGAGLEVFGIYDGYQGLYEDRIKQLDRSSVSDVINRGGTFLGSARFPQFREVEVREKAIENLKKHGIEALVVIGGDGSYMGAKKLTEMGFPCIGLPGTIDNDIAGTDYTIGYLTALNTVIEAIDRLRDTSSSHQRISIVEIMGRHCGDLTLTSAIAGGCEYIITPETGLNMEQLISNIKDGIAKGKKHAIIALTELMMDANKLAKEIESATGRETRATVLGHIQRGGKPTAFDRVLASRMGNYAVHLLMEGHGGRCVGIQKEQLVHHDIIDAIENMKRPVRTDLYKVAEELF</sequence>
<protein>
    <recommendedName>
        <fullName evidence="1">ATP-dependent 6-phosphofructokinase</fullName>
        <shortName evidence="1">ATP-PFK</shortName>
        <shortName evidence="1">Phosphofructokinase</shortName>
        <ecNumber evidence="1">2.7.1.11</ecNumber>
    </recommendedName>
    <alternativeName>
        <fullName evidence="1">Phosphohexokinase</fullName>
    </alternativeName>
</protein>
<accession>Q9KNP2</accession>